<comment type="function">
    <text evidence="1">This protein is one of the early assembly proteins of the 50S ribosomal subunit, although it is not seen to bind rRNA by itself. It is important during the early stages of 50S assembly.</text>
</comment>
<comment type="subunit">
    <text evidence="1">Part of the 50S ribosomal subunit.</text>
</comment>
<comment type="similarity">
    <text evidence="1">Belongs to the universal ribosomal protein uL13 family.</text>
</comment>
<reference key="1">
    <citation type="journal article" date="2001" name="J. Bacteriol.">
        <title>Genome sequence and comparative analysis of the solvent-producing bacterium Clostridium acetobutylicum.</title>
        <authorList>
            <person name="Noelling J."/>
            <person name="Breton G."/>
            <person name="Omelchenko M.V."/>
            <person name="Makarova K.S."/>
            <person name="Zeng Q."/>
            <person name="Gibson R."/>
            <person name="Lee H.M."/>
            <person name="Dubois J."/>
            <person name="Qiu D."/>
            <person name="Hitti J."/>
            <person name="Wolf Y.I."/>
            <person name="Tatusov R.L."/>
            <person name="Sabathe F."/>
            <person name="Doucette-Stamm L.A."/>
            <person name="Soucaille P."/>
            <person name="Daly M.J."/>
            <person name="Bennett G.N."/>
            <person name="Koonin E.V."/>
            <person name="Smith D.R."/>
        </authorList>
    </citation>
    <scope>NUCLEOTIDE SEQUENCE [LARGE SCALE GENOMIC DNA]</scope>
    <source>
        <strain>ATCC 824 / DSM 792 / JCM 1419 / IAM 19013 / LMG 5710 / NBRC 13948 / NRRL B-527 / VKM B-1787 / 2291 / W</strain>
    </source>
</reference>
<evidence type="ECO:0000255" key="1">
    <source>
        <dbReference type="HAMAP-Rule" id="MF_01366"/>
    </source>
</evidence>
<evidence type="ECO:0000305" key="2"/>
<name>RL13_CLOAB</name>
<protein>
    <recommendedName>
        <fullName evidence="1">Large ribosomal subunit protein uL13</fullName>
    </recommendedName>
    <alternativeName>
        <fullName evidence="2">50S ribosomal protein L13</fullName>
    </alternativeName>
</protein>
<organism>
    <name type="scientific">Clostridium acetobutylicum (strain ATCC 824 / DSM 792 / JCM 1419 / IAM 19013 / LMG 5710 / NBRC 13948 / NRRL B-527 / VKM B-1787 / 2291 / W)</name>
    <dbReference type="NCBI Taxonomy" id="272562"/>
    <lineage>
        <taxon>Bacteria</taxon>
        <taxon>Bacillati</taxon>
        <taxon>Bacillota</taxon>
        <taxon>Clostridia</taxon>
        <taxon>Eubacteriales</taxon>
        <taxon>Clostridiaceae</taxon>
        <taxon>Clostridium</taxon>
    </lineage>
</organism>
<accession>Q97EL2</accession>
<sequence length="144" mass="16441">MKSYLAKPQEIERKWYVIDVAGKPLGRAASQIASILRGKNKPIYTPNVDTGDYVIVLNAEKVLLTGKKADQKMFRHHTLYPGGLKEMSYKDAIAKKADFVFYEAVRRMLPSGVLGRKMIKKLKVYKGEEHNNEAQKPEVLELKY</sequence>
<feature type="chain" id="PRO_0000261711" description="Large ribosomal subunit protein uL13">
    <location>
        <begin position="1"/>
        <end position="144"/>
    </location>
</feature>
<keyword id="KW-1185">Reference proteome</keyword>
<keyword id="KW-0687">Ribonucleoprotein</keyword>
<keyword id="KW-0689">Ribosomal protein</keyword>
<proteinExistence type="inferred from homology"/>
<gene>
    <name evidence="1" type="primary">rplM</name>
    <name type="ordered locus">CA_C3098</name>
</gene>
<dbReference type="EMBL" id="AE001437">
    <property type="protein sequence ID" value="AAK81038.1"/>
    <property type="molecule type" value="Genomic_DNA"/>
</dbReference>
<dbReference type="PIR" id="C97281">
    <property type="entry name" value="C97281"/>
</dbReference>
<dbReference type="RefSeq" id="NP_349698.1">
    <property type="nucleotide sequence ID" value="NC_003030.1"/>
</dbReference>
<dbReference type="RefSeq" id="WP_010966379.1">
    <property type="nucleotide sequence ID" value="NC_003030.1"/>
</dbReference>
<dbReference type="SMR" id="Q97EL2"/>
<dbReference type="STRING" id="272562.CA_C3098"/>
<dbReference type="GeneID" id="44999585"/>
<dbReference type="KEGG" id="cac:CA_C3098"/>
<dbReference type="PATRIC" id="fig|272562.8.peg.3281"/>
<dbReference type="eggNOG" id="COG0102">
    <property type="taxonomic scope" value="Bacteria"/>
</dbReference>
<dbReference type="HOGENOM" id="CLU_082184_2_2_9"/>
<dbReference type="OrthoDB" id="9801330at2"/>
<dbReference type="Proteomes" id="UP000000814">
    <property type="component" value="Chromosome"/>
</dbReference>
<dbReference type="GO" id="GO:0022625">
    <property type="term" value="C:cytosolic large ribosomal subunit"/>
    <property type="evidence" value="ECO:0007669"/>
    <property type="project" value="TreeGrafter"/>
</dbReference>
<dbReference type="GO" id="GO:0003729">
    <property type="term" value="F:mRNA binding"/>
    <property type="evidence" value="ECO:0007669"/>
    <property type="project" value="TreeGrafter"/>
</dbReference>
<dbReference type="GO" id="GO:0003735">
    <property type="term" value="F:structural constituent of ribosome"/>
    <property type="evidence" value="ECO:0007669"/>
    <property type="project" value="InterPro"/>
</dbReference>
<dbReference type="GO" id="GO:0017148">
    <property type="term" value="P:negative regulation of translation"/>
    <property type="evidence" value="ECO:0007669"/>
    <property type="project" value="TreeGrafter"/>
</dbReference>
<dbReference type="GO" id="GO:0006412">
    <property type="term" value="P:translation"/>
    <property type="evidence" value="ECO:0007669"/>
    <property type="project" value="UniProtKB-UniRule"/>
</dbReference>
<dbReference type="CDD" id="cd00392">
    <property type="entry name" value="Ribosomal_L13"/>
    <property type="match status" value="1"/>
</dbReference>
<dbReference type="FunFam" id="3.90.1180.10:FF:000001">
    <property type="entry name" value="50S ribosomal protein L13"/>
    <property type="match status" value="1"/>
</dbReference>
<dbReference type="Gene3D" id="3.90.1180.10">
    <property type="entry name" value="Ribosomal protein L13"/>
    <property type="match status" value="1"/>
</dbReference>
<dbReference type="HAMAP" id="MF_01366">
    <property type="entry name" value="Ribosomal_uL13"/>
    <property type="match status" value="1"/>
</dbReference>
<dbReference type="InterPro" id="IPR005822">
    <property type="entry name" value="Ribosomal_uL13"/>
</dbReference>
<dbReference type="InterPro" id="IPR005823">
    <property type="entry name" value="Ribosomal_uL13_bac-type"/>
</dbReference>
<dbReference type="InterPro" id="IPR023563">
    <property type="entry name" value="Ribosomal_uL13_CS"/>
</dbReference>
<dbReference type="InterPro" id="IPR036899">
    <property type="entry name" value="Ribosomal_uL13_sf"/>
</dbReference>
<dbReference type="NCBIfam" id="TIGR01066">
    <property type="entry name" value="rplM_bact"/>
    <property type="match status" value="1"/>
</dbReference>
<dbReference type="PANTHER" id="PTHR11545:SF2">
    <property type="entry name" value="LARGE RIBOSOMAL SUBUNIT PROTEIN UL13M"/>
    <property type="match status" value="1"/>
</dbReference>
<dbReference type="PANTHER" id="PTHR11545">
    <property type="entry name" value="RIBOSOMAL PROTEIN L13"/>
    <property type="match status" value="1"/>
</dbReference>
<dbReference type="Pfam" id="PF00572">
    <property type="entry name" value="Ribosomal_L13"/>
    <property type="match status" value="1"/>
</dbReference>
<dbReference type="PIRSF" id="PIRSF002181">
    <property type="entry name" value="Ribosomal_L13"/>
    <property type="match status" value="1"/>
</dbReference>
<dbReference type="SUPFAM" id="SSF52161">
    <property type="entry name" value="Ribosomal protein L13"/>
    <property type="match status" value="1"/>
</dbReference>
<dbReference type="PROSITE" id="PS00783">
    <property type="entry name" value="RIBOSOMAL_L13"/>
    <property type="match status" value="1"/>
</dbReference>